<accession>Q9M0L3</accession>
<accession>Q8LCF6</accession>
<accession>Q9SW22</accession>
<sequence length="170" mass="18669">MMGDNEGRRTPLLNLGVQVSMRVLTIGAAMASMWVMITNREVASVYGIAFEAKYSYSSAFRYLVYAQIAVCAATLFTLVWACLAVRRRGLVFALFFFDLLTTLTAISAFSAAFAEGYVGKYGNKQAGWLPICGYVHGYCSRVTISLAMSFASFILLFILTVLTASAARHY</sequence>
<gene>
    <name type="ordered locus">At4g25040</name>
    <name type="ORF">F13M23.180</name>
</gene>
<comment type="subunit">
    <text evidence="1">Homodimer and heterodimers.</text>
</comment>
<comment type="subcellular location">
    <subcellularLocation>
        <location evidence="1">Cell membrane</location>
        <topology evidence="1">Multi-pass membrane protein</topology>
    </subcellularLocation>
</comment>
<comment type="tissue specificity">
    <text evidence="3">In flowers, expressed in the anther wall.</text>
</comment>
<comment type="similarity">
    <text evidence="4">Belongs to the Casparian strip membrane proteins (CASP) family.</text>
</comment>
<comment type="sequence caution" evidence="4">
    <conflict type="erroneous initiation">
        <sequence resource="EMBL-CDS" id="AAM63685"/>
    </conflict>
    <text>Truncated N-terminus.</text>
</comment>
<comment type="sequence caution" evidence="4">
    <conflict type="erroneous gene model prediction">
        <sequence resource="EMBL-CDS" id="CAB36746"/>
    </conflict>
</comment>
<keyword id="KW-1003">Cell membrane</keyword>
<keyword id="KW-0472">Membrane</keyword>
<keyword id="KW-1185">Reference proteome</keyword>
<keyword id="KW-0812">Transmembrane</keyword>
<keyword id="KW-1133">Transmembrane helix</keyword>
<protein>
    <recommendedName>
        <fullName>CASP-like protein 1F1</fullName>
        <shortName>AtCASPL1F1</shortName>
    </recommendedName>
</protein>
<reference key="1">
    <citation type="journal article" date="1999" name="Nature">
        <title>Sequence and analysis of chromosome 4 of the plant Arabidopsis thaliana.</title>
        <authorList>
            <person name="Mayer K.F.X."/>
            <person name="Schueller C."/>
            <person name="Wambutt R."/>
            <person name="Murphy G."/>
            <person name="Volckaert G."/>
            <person name="Pohl T."/>
            <person name="Duesterhoeft A."/>
            <person name="Stiekema W."/>
            <person name="Entian K.-D."/>
            <person name="Terryn N."/>
            <person name="Harris B."/>
            <person name="Ansorge W."/>
            <person name="Brandt P."/>
            <person name="Grivell L.A."/>
            <person name="Rieger M."/>
            <person name="Weichselgartner M."/>
            <person name="de Simone V."/>
            <person name="Obermaier B."/>
            <person name="Mache R."/>
            <person name="Mueller M."/>
            <person name="Kreis M."/>
            <person name="Delseny M."/>
            <person name="Puigdomenech P."/>
            <person name="Watson M."/>
            <person name="Schmidtheini T."/>
            <person name="Reichert B."/>
            <person name="Portetelle D."/>
            <person name="Perez-Alonso M."/>
            <person name="Boutry M."/>
            <person name="Bancroft I."/>
            <person name="Vos P."/>
            <person name="Hoheisel J."/>
            <person name="Zimmermann W."/>
            <person name="Wedler H."/>
            <person name="Ridley P."/>
            <person name="Langham S.-A."/>
            <person name="McCullagh B."/>
            <person name="Bilham L."/>
            <person name="Robben J."/>
            <person name="van der Schueren J."/>
            <person name="Grymonprez B."/>
            <person name="Chuang Y.-J."/>
            <person name="Vandenbussche F."/>
            <person name="Braeken M."/>
            <person name="Weltjens I."/>
            <person name="Voet M."/>
            <person name="Bastiaens I."/>
            <person name="Aert R."/>
            <person name="Defoor E."/>
            <person name="Weitzenegger T."/>
            <person name="Bothe G."/>
            <person name="Ramsperger U."/>
            <person name="Hilbert H."/>
            <person name="Braun M."/>
            <person name="Holzer E."/>
            <person name="Brandt A."/>
            <person name="Peters S."/>
            <person name="van Staveren M."/>
            <person name="Dirkse W."/>
            <person name="Mooijman P."/>
            <person name="Klein Lankhorst R."/>
            <person name="Rose M."/>
            <person name="Hauf J."/>
            <person name="Koetter P."/>
            <person name="Berneiser S."/>
            <person name="Hempel S."/>
            <person name="Feldpausch M."/>
            <person name="Lamberth S."/>
            <person name="Van den Daele H."/>
            <person name="De Keyser A."/>
            <person name="Buysshaert C."/>
            <person name="Gielen J."/>
            <person name="Villarroel R."/>
            <person name="De Clercq R."/>
            <person name="van Montagu M."/>
            <person name="Rogers J."/>
            <person name="Cronin A."/>
            <person name="Quail M.A."/>
            <person name="Bray-Allen S."/>
            <person name="Clark L."/>
            <person name="Doggett J."/>
            <person name="Hall S."/>
            <person name="Kay M."/>
            <person name="Lennard N."/>
            <person name="McLay K."/>
            <person name="Mayes R."/>
            <person name="Pettett A."/>
            <person name="Rajandream M.A."/>
            <person name="Lyne M."/>
            <person name="Benes V."/>
            <person name="Rechmann S."/>
            <person name="Borkova D."/>
            <person name="Bloecker H."/>
            <person name="Scharfe M."/>
            <person name="Grimm M."/>
            <person name="Loehnert T.-H."/>
            <person name="Dose S."/>
            <person name="de Haan M."/>
            <person name="Maarse A.C."/>
            <person name="Schaefer M."/>
            <person name="Mueller-Auer S."/>
            <person name="Gabel C."/>
            <person name="Fuchs M."/>
            <person name="Fartmann B."/>
            <person name="Granderath K."/>
            <person name="Dauner D."/>
            <person name="Herzl A."/>
            <person name="Neumann S."/>
            <person name="Argiriou A."/>
            <person name="Vitale D."/>
            <person name="Liguori R."/>
            <person name="Piravandi E."/>
            <person name="Massenet O."/>
            <person name="Quigley F."/>
            <person name="Clabauld G."/>
            <person name="Muendlein A."/>
            <person name="Felber R."/>
            <person name="Schnabl S."/>
            <person name="Hiller R."/>
            <person name="Schmidt W."/>
            <person name="Lecharny A."/>
            <person name="Aubourg S."/>
            <person name="Chefdor F."/>
            <person name="Cooke R."/>
            <person name="Berger C."/>
            <person name="Monfort A."/>
            <person name="Casacuberta E."/>
            <person name="Gibbons T."/>
            <person name="Weber N."/>
            <person name="Vandenbol M."/>
            <person name="Bargues M."/>
            <person name="Terol J."/>
            <person name="Torres A."/>
            <person name="Perez-Perez A."/>
            <person name="Purnelle B."/>
            <person name="Bent E."/>
            <person name="Johnson S."/>
            <person name="Tacon D."/>
            <person name="Jesse T."/>
            <person name="Heijnen L."/>
            <person name="Schwarz S."/>
            <person name="Scholler P."/>
            <person name="Heber S."/>
            <person name="Francs P."/>
            <person name="Bielke C."/>
            <person name="Frishman D."/>
            <person name="Haase D."/>
            <person name="Lemcke K."/>
            <person name="Mewes H.-W."/>
            <person name="Stocker S."/>
            <person name="Zaccaria P."/>
            <person name="Bevan M."/>
            <person name="Wilson R.K."/>
            <person name="de la Bastide M."/>
            <person name="Habermann K."/>
            <person name="Parnell L."/>
            <person name="Dedhia N."/>
            <person name="Gnoj L."/>
            <person name="Schutz K."/>
            <person name="Huang E."/>
            <person name="Spiegel L."/>
            <person name="Sekhon M."/>
            <person name="Murray J."/>
            <person name="Sheet P."/>
            <person name="Cordes M."/>
            <person name="Abu-Threideh J."/>
            <person name="Stoneking T."/>
            <person name="Kalicki J."/>
            <person name="Graves T."/>
            <person name="Harmon G."/>
            <person name="Edwards J."/>
            <person name="Latreille P."/>
            <person name="Courtney L."/>
            <person name="Cloud J."/>
            <person name="Abbott A."/>
            <person name="Scott K."/>
            <person name="Johnson D."/>
            <person name="Minx P."/>
            <person name="Bentley D."/>
            <person name="Fulton B."/>
            <person name="Miller N."/>
            <person name="Greco T."/>
            <person name="Kemp K."/>
            <person name="Kramer J."/>
            <person name="Fulton L."/>
            <person name="Mardis E."/>
            <person name="Dante M."/>
            <person name="Pepin K."/>
            <person name="Hillier L.W."/>
            <person name="Nelson J."/>
            <person name="Spieth J."/>
            <person name="Ryan E."/>
            <person name="Andrews S."/>
            <person name="Geisel C."/>
            <person name="Layman D."/>
            <person name="Du H."/>
            <person name="Ali J."/>
            <person name="Berghoff A."/>
            <person name="Jones K."/>
            <person name="Drone K."/>
            <person name="Cotton M."/>
            <person name="Joshu C."/>
            <person name="Antonoiu B."/>
            <person name="Zidanic M."/>
            <person name="Strong C."/>
            <person name="Sun H."/>
            <person name="Lamar B."/>
            <person name="Yordan C."/>
            <person name="Ma P."/>
            <person name="Zhong J."/>
            <person name="Preston R."/>
            <person name="Vil D."/>
            <person name="Shekher M."/>
            <person name="Matero A."/>
            <person name="Shah R."/>
            <person name="Swaby I.K."/>
            <person name="O'Shaughnessy A."/>
            <person name="Rodriguez M."/>
            <person name="Hoffman J."/>
            <person name="Till S."/>
            <person name="Granat S."/>
            <person name="Shohdy N."/>
            <person name="Hasegawa A."/>
            <person name="Hameed A."/>
            <person name="Lodhi M."/>
            <person name="Johnson A."/>
            <person name="Chen E."/>
            <person name="Marra M.A."/>
            <person name="Martienssen R."/>
            <person name="McCombie W.R."/>
        </authorList>
    </citation>
    <scope>NUCLEOTIDE SEQUENCE [LARGE SCALE GENOMIC DNA]</scope>
    <source>
        <strain>cv. Columbia</strain>
    </source>
</reference>
<reference key="2">
    <citation type="journal article" date="2017" name="Plant J.">
        <title>Araport11: a complete reannotation of the Arabidopsis thaliana reference genome.</title>
        <authorList>
            <person name="Cheng C.Y."/>
            <person name="Krishnakumar V."/>
            <person name="Chan A.P."/>
            <person name="Thibaud-Nissen F."/>
            <person name="Schobel S."/>
            <person name="Town C.D."/>
        </authorList>
    </citation>
    <scope>GENOME REANNOTATION</scope>
    <source>
        <strain>cv. Columbia</strain>
    </source>
</reference>
<reference key="3">
    <citation type="submission" date="2002-03" db="EMBL/GenBank/DDBJ databases">
        <title>Full-length cDNA from Arabidopsis thaliana.</title>
        <authorList>
            <person name="Brover V.V."/>
            <person name="Troukhan M.E."/>
            <person name="Alexandrov N.A."/>
            <person name="Lu Y.-P."/>
            <person name="Flavell R.B."/>
            <person name="Feldmann K.A."/>
        </authorList>
    </citation>
    <scope>NUCLEOTIDE SEQUENCE [LARGE SCALE MRNA]</scope>
</reference>
<reference key="4">
    <citation type="journal article" date="2014" name="Plant Physiol.">
        <title>Functional and evolutionary analysis of the CASPARIAN STRIP MEMBRANE DOMAIN PROTEIN family.</title>
        <authorList>
            <person name="Roppolo D."/>
            <person name="Boeckmann B."/>
            <person name="Pfister A."/>
            <person name="Boutet E."/>
            <person name="Rubio M.C."/>
            <person name="Denervaud-Tendon V."/>
            <person name="Vermeer J.E."/>
            <person name="Gheyselinck J."/>
            <person name="Xenarios I."/>
            <person name="Geldner N."/>
        </authorList>
    </citation>
    <scope>TISSUE SPECIFICITY</scope>
    <scope>GENE FAMILY</scope>
    <scope>NOMENCLATURE</scope>
</reference>
<evidence type="ECO:0000250" key="1"/>
<evidence type="ECO:0000255" key="2"/>
<evidence type="ECO:0000269" key="3">
    <source>
    </source>
</evidence>
<evidence type="ECO:0000305" key="4"/>
<dbReference type="EMBL" id="AL035523">
    <property type="protein sequence ID" value="CAB36746.1"/>
    <property type="status" value="ALT_SEQ"/>
    <property type="molecule type" value="Genomic_DNA"/>
</dbReference>
<dbReference type="EMBL" id="AL161562">
    <property type="protein sequence ID" value="CAB79413.1"/>
    <property type="molecule type" value="Genomic_DNA"/>
</dbReference>
<dbReference type="EMBL" id="CP002687">
    <property type="protein sequence ID" value="AEE84995.1"/>
    <property type="molecule type" value="Genomic_DNA"/>
</dbReference>
<dbReference type="EMBL" id="AY086627">
    <property type="protein sequence ID" value="AAM63685.1"/>
    <property type="status" value="ALT_INIT"/>
    <property type="molecule type" value="mRNA"/>
</dbReference>
<dbReference type="PIR" id="A85289">
    <property type="entry name" value="A85289"/>
</dbReference>
<dbReference type="PIR" id="T05525">
    <property type="entry name" value="T05525"/>
</dbReference>
<dbReference type="RefSeq" id="NP_194234.1">
    <property type="nucleotide sequence ID" value="NM_118636.3"/>
</dbReference>
<dbReference type="SMR" id="Q9M0L3"/>
<dbReference type="PaxDb" id="3702-AT4G25040.1"/>
<dbReference type="ProteomicsDB" id="222710"/>
<dbReference type="EnsemblPlants" id="AT4G25040.1">
    <property type="protein sequence ID" value="AT4G25040.1"/>
    <property type="gene ID" value="AT4G25040"/>
</dbReference>
<dbReference type="GeneID" id="828607"/>
<dbReference type="Gramene" id="AT4G25040.1">
    <property type="protein sequence ID" value="AT4G25040.1"/>
    <property type="gene ID" value="AT4G25040"/>
</dbReference>
<dbReference type="KEGG" id="ath:AT4G25040"/>
<dbReference type="Araport" id="AT4G25040"/>
<dbReference type="TAIR" id="AT4G25040">
    <property type="gene designation" value="CASPL1F1"/>
</dbReference>
<dbReference type="eggNOG" id="ENOG502S695">
    <property type="taxonomic scope" value="Eukaryota"/>
</dbReference>
<dbReference type="HOGENOM" id="CLU_066104_3_0_1"/>
<dbReference type="InParanoid" id="Q9M0L3"/>
<dbReference type="OMA" id="WVIFTAN"/>
<dbReference type="OrthoDB" id="1904499at2759"/>
<dbReference type="PhylomeDB" id="Q9M0L3"/>
<dbReference type="PRO" id="PR:Q9M0L3"/>
<dbReference type="Proteomes" id="UP000006548">
    <property type="component" value="Chromosome 4"/>
</dbReference>
<dbReference type="ExpressionAtlas" id="Q9M0L3">
    <property type="expression patterns" value="baseline and differential"/>
</dbReference>
<dbReference type="GO" id="GO:0005886">
    <property type="term" value="C:plasma membrane"/>
    <property type="evidence" value="ECO:0007669"/>
    <property type="project" value="UniProtKB-SubCell"/>
</dbReference>
<dbReference type="InterPro" id="IPR006459">
    <property type="entry name" value="CASP/CASPL"/>
</dbReference>
<dbReference type="InterPro" id="IPR006702">
    <property type="entry name" value="CASP_dom"/>
</dbReference>
<dbReference type="InterPro" id="IPR044173">
    <property type="entry name" value="CASPL"/>
</dbReference>
<dbReference type="NCBIfam" id="TIGR01569">
    <property type="entry name" value="A_tha_TIGR01569"/>
    <property type="match status" value="1"/>
</dbReference>
<dbReference type="PANTHER" id="PTHR36488">
    <property type="entry name" value="CASP-LIKE PROTEIN 1U1"/>
    <property type="match status" value="1"/>
</dbReference>
<dbReference type="PANTHER" id="PTHR36488:SF8">
    <property type="entry name" value="CASP-LIKE PROTEIN 1U1"/>
    <property type="match status" value="1"/>
</dbReference>
<dbReference type="Pfam" id="PF04535">
    <property type="entry name" value="CASP_dom"/>
    <property type="match status" value="1"/>
</dbReference>
<feature type="chain" id="PRO_0000308680" description="CASP-like protein 1F1">
    <location>
        <begin position="1"/>
        <end position="170"/>
    </location>
</feature>
<feature type="topological domain" description="Cytoplasmic" evidence="2">
    <location>
        <begin position="1"/>
        <end position="16"/>
    </location>
</feature>
<feature type="transmembrane region" description="Helical" evidence="2">
    <location>
        <begin position="17"/>
        <end position="37"/>
    </location>
</feature>
<feature type="topological domain" description="Extracellular" evidence="2">
    <location>
        <begin position="38"/>
        <end position="62"/>
    </location>
</feature>
<feature type="transmembrane region" description="Helical" evidence="2">
    <location>
        <begin position="63"/>
        <end position="83"/>
    </location>
</feature>
<feature type="topological domain" description="Cytoplasmic" evidence="2">
    <location>
        <begin position="84"/>
        <end position="88"/>
    </location>
</feature>
<feature type="transmembrane region" description="Helical" evidence="2">
    <location>
        <begin position="89"/>
        <end position="109"/>
    </location>
</feature>
<feature type="topological domain" description="Extracellular" evidence="2">
    <location>
        <begin position="110"/>
        <end position="141"/>
    </location>
</feature>
<feature type="transmembrane region" description="Helical" evidence="2">
    <location>
        <begin position="142"/>
        <end position="162"/>
    </location>
</feature>
<feature type="topological domain" description="Cytoplasmic" evidence="2">
    <location>
        <begin position="163"/>
        <end position="170"/>
    </location>
</feature>
<organism>
    <name type="scientific">Arabidopsis thaliana</name>
    <name type="common">Mouse-ear cress</name>
    <dbReference type="NCBI Taxonomy" id="3702"/>
    <lineage>
        <taxon>Eukaryota</taxon>
        <taxon>Viridiplantae</taxon>
        <taxon>Streptophyta</taxon>
        <taxon>Embryophyta</taxon>
        <taxon>Tracheophyta</taxon>
        <taxon>Spermatophyta</taxon>
        <taxon>Magnoliopsida</taxon>
        <taxon>eudicotyledons</taxon>
        <taxon>Gunneridae</taxon>
        <taxon>Pentapetalae</taxon>
        <taxon>rosids</taxon>
        <taxon>malvids</taxon>
        <taxon>Brassicales</taxon>
        <taxon>Brassicaceae</taxon>
        <taxon>Camelineae</taxon>
        <taxon>Arabidopsis</taxon>
    </lineage>
</organism>
<name>CSPLR_ARATH</name>
<proteinExistence type="evidence at transcript level"/>